<dbReference type="EMBL" id="AE000516">
    <property type="protein sequence ID" value="AAK46342.1"/>
    <property type="molecule type" value="Genomic_DNA"/>
</dbReference>
<dbReference type="PIR" id="G70759">
    <property type="entry name" value="G70759"/>
</dbReference>
<dbReference type="SMR" id="P9WLM6"/>
<dbReference type="KEGG" id="mtc:MT2064.1"/>
<dbReference type="PATRIC" id="fig|83331.31.peg.2223"/>
<dbReference type="HOGENOM" id="CLU_179376_3_1_11"/>
<dbReference type="Proteomes" id="UP000001020">
    <property type="component" value="Chromosome"/>
</dbReference>
<dbReference type="GO" id="GO:0046872">
    <property type="term" value="F:metal ion binding"/>
    <property type="evidence" value="ECO:0007669"/>
    <property type="project" value="UniProtKB-KW"/>
</dbReference>
<dbReference type="InterPro" id="IPR019239">
    <property type="entry name" value="VapB_antitoxin"/>
</dbReference>
<dbReference type="Pfam" id="PF09957">
    <property type="entry name" value="VapB_antitoxin"/>
    <property type="match status" value="1"/>
</dbReference>
<comment type="function">
    <text evidence="1">Antitoxin component of a type II toxin-antitoxin (TA) system. Neutralizes the toxic effect of cognate toxin VapC15.</text>
</comment>
<comment type="cofactor">
    <cofactor evidence="1">
        <name>Mg(2+)</name>
        <dbReference type="ChEBI" id="CHEBI:18420"/>
    </cofactor>
    <text evidence="1">The heterotrimer binds 1 Mg(2+)-Mn(2+) pair while the heterotetramer binds 2 pairs. Both metals are shared by the toxin-antitoxin pair.</text>
</comment>
<comment type="cofactor">
    <cofactor evidence="1">
        <name>Mn(2+)</name>
        <dbReference type="ChEBI" id="CHEBI:29035"/>
    </cofactor>
    <text evidence="1">The heterotrimer binds 1 Mg(2+)-Mn(2+) pair while the heterotetramer binds 2 pairs. Both metals are shared by the toxin-antitoxin pair.</text>
</comment>
<comment type="subunit">
    <text evidence="1">Forms a VapB15-VapC15(2) heterotrimer and a VapB15(2)-VapC15(2) heterotetramer; each toxin pair forms a homodimer which creates a channel in which the antitoxin binds.</text>
</comment>
<keyword id="KW-0460">Magnesium</keyword>
<keyword id="KW-0464">Manganese</keyword>
<keyword id="KW-0479">Metal-binding</keyword>
<keyword id="KW-1185">Reference proteome</keyword>
<keyword id="KW-1277">Toxin-antitoxin system</keyword>
<feature type="chain" id="PRO_0000427452" description="Antitoxin VapB15">
    <location>
        <begin position="1"/>
        <end position="80"/>
    </location>
</feature>
<feature type="region of interest" description="Disordered" evidence="2">
    <location>
        <begin position="60"/>
        <end position="80"/>
    </location>
</feature>
<feature type="compositionally biased region" description="Basic and acidic residues" evidence="2">
    <location>
        <begin position="71"/>
        <end position="80"/>
    </location>
</feature>
<feature type="binding site" evidence="1">
    <location>
        <position position="67"/>
    </location>
    <ligand>
        <name>Mg(2+)</name>
        <dbReference type="ChEBI" id="CHEBI:18420"/>
        <note>ligand shared with toxin</note>
    </ligand>
</feature>
<feature type="binding site" evidence="1">
    <location>
        <position position="67"/>
    </location>
    <ligand>
        <name>Mn(2+)</name>
        <dbReference type="ChEBI" id="CHEBI:29035"/>
        <note>ligand shared with toxin</note>
    </ligand>
</feature>
<gene>
    <name type="primary">vapB15</name>
    <name type="ordered locus">MT2064.1</name>
</gene>
<organism>
    <name type="scientific">Mycobacterium tuberculosis (strain CDC 1551 / Oshkosh)</name>
    <dbReference type="NCBI Taxonomy" id="83331"/>
    <lineage>
        <taxon>Bacteria</taxon>
        <taxon>Bacillati</taxon>
        <taxon>Actinomycetota</taxon>
        <taxon>Actinomycetes</taxon>
        <taxon>Mycobacteriales</taxon>
        <taxon>Mycobacteriaceae</taxon>
        <taxon>Mycobacterium</taxon>
        <taxon>Mycobacterium tuberculosis complex</taxon>
    </lineage>
</organism>
<evidence type="ECO:0000250" key="1">
    <source>
        <dbReference type="UniProtKB" id="P9WLM7"/>
    </source>
</evidence>
<evidence type="ECO:0000256" key="2">
    <source>
        <dbReference type="SAM" id="MobiDB-lite"/>
    </source>
</evidence>
<reference key="1">
    <citation type="journal article" date="2002" name="J. Bacteriol.">
        <title>Whole-genome comparison of Mycobacterium tuberculosis clinical and laboratory strains.</title>
        <authorList>
            <person name="Fleischmann R.D."/>
            <person name="Alland D."/>
            <person name="Eisen J.A."/>
            <person name="Carpenter L."/>
            <person name="White O."/>
            <person name="Peterson J.D."/>
            <person name="DeBoy R.T."/>
            <person name="Dodson R.J."/>
            <person name="Gwinn M.L."/>
            <person name="Haft D.H."/>
            <person name="Hickey E.K."/>
            <person name="Kolonay J.F."/>
            <person name="Nelson W.C."/>
            <person name="Umayam L.A."/>
            <person name="Ermolaeva M.D."/>
            <person name="Salzberg S.L."/>
            <person name="Delcher A."/>
            <person name="Utterback T.R."/>
            <person name="Weidman J.F."/>
            <person name="Khouri H.M."/>
            <person name="Gill J."/>
            <person name="Mikula A."/>
            <person name="Bishai W."/>
            <person name="Jacobs W.R. Jr."/>
            <person name="Venter J.C."/>
            <person name="Fraser C.M."/>
        </authorList>
    </citation>
    <scope>NUCLEOTIDE SEQUENCE [LARGE SCALE GENOMIC DNA]</scope>
    <source>
        <strain>CDC 1551 / Oshkosh</strain>
    </source>
</reference>
<protein>
    <recommendedName>
        <fullName>Antitoxin VapB15</fullName>
    </recommendedName>
</protein>
<proteinExistence type="inferred from homology"/>
<name>VPB15_MYCTO</name>
<sequence length="80" mass="8884">MYSGVVSRTNIEIDDELVAAAQRMYRLDSKRSAVDLALRRLVGEPLGRDEALALQGSGFDFSNDEIESFSDTDRKLADES</sequence>
<accession>P9WLM6</accession>
<accession>L0T9X2</accession>
<accession>Q10848</accession>